<gene>
    <name type="primary">TIMP1</name>
</gene>
<reference key="1">
    <citation type="journal article" date="1990" name="Biochem. Biophys. Res. Commun.">
        <title>mRNA of bovine tissue inhibitor of metalloproteinase: sequence and expression in bovine ovarian tissue.</title>
        <authorList>
            <person name="Freudenstein J."/>
            <person name="Wagner S."/>
            <person name="Luck R.M."/>
            <person name="Einspanier R."/>
            <person name="Scheit K.H."/>
        </authorList>
    </citation>
    <scope>NUCLEOTIDE SEQUENCE [MRNA]</scope>
</reference>
<reference key="2">
    <citation type="journal article" date="1994" name="Biol. Reprod.">
        <title>Tissue inhibitor of metalloproteinases (TIMP-1) produced by granulosa and oviduct cells enhances in vitro development of bovine embryo.</title>
        <authorList>
            <person name="Satoh T."/>
            <person name="Kobayashi K."/>
            <person name="Yamashita S."/>
            <person name="Kikuchi M."/>
            <person name="Sendai Y."/>
            <person name="Hoshi H."/>
        </authorList>
    </citation>
    <scope>NUCLEOTIDE SEQUENCE [MRNA]</scope>
    <scope>PROTEIN SEQUENCE OF 25-52</scope>
    <scope>SUBCELLULAR LOCATION</scope>
    <scope>FUNCTION</scope>
</reference>
<reference key="3">
    <citation type="journal article" date="2004" name="Mol. Cell. Endocrinol.">
        <title>ACTH induces TIMP-1 expression and inhibits collagenase in adrenal cortex cells.</title>
        <authorList>
            <person name="Reichenstein M."/>
            <person name="Reich R."/>
            <person name="Lehoux J.-G."/>
            <person name="Hanukoglu I."/>
        </authorList>
    </citation>
    <scope>NUCLEOTIDE SEQUENCE [MRNA]</scope>
    <source>
        <tissue>Adrenal cortex</tissue>
    </source>
</reference>
<reference key="4">
    <citation type="submission" date="2005-08" db="EMBL/GenBank/DDBJ databases">
        <authorList>
            <consortium name="NIH - Mammalian Gene Collection (MGC) project"/>
        </authorList>
    </citation>
    <scope>NUCLEOTIDE SEQUENCE [LARGE SCALE MRNA]</scope>
    <source>
        <strain>Crossbred X Angus</strain>
        <tissue>Ileum</tissue>
    </source>
</reference>
<reference key="5">
    <citation type="submission" date="1999-04" db="EMBL/GenBank/DDBJ databases">
        <title>Involvement of fibroblasts and muscle cells in the expression of an extracellular proteolytic cascade in bovine skeletal muscle.</title>
        <authorList>
            <person name="Balcerzak D."/>
            <person name="Querengesser L."/>
            <person name="Dixon W.T."/>
            <person name="Baracos V.E."/>
        </authorList>
    </citation>
    <scope>NUCLEOTIDE SEQUENCE [MRNA] OF 25-191</scope>
    <source>
        <tissue>Skeletal muscle</tissue>
    </source>
</reference>
<reference key="6">
    <citation type="journal article" date="1989" name="J. Biol. Chem.">
        <title>Purification and characterization of two related but distinct metalloproteinase inhibitors secreted by bovine aortic endothelial cells.</title>
        <authorList>
            <person name="de Clerck Y.A."/>
            <person name="Yean T.D."/>
            <person name="Ratzkin B.J."/>
            <person name="Lu H.S."/>
            <person name="Langley K.E."/>
        </authorList>
    </citation>
    <scope>PRELIMINARY PROTEIN SEQUENCE OF 24-69</scope>
    <scope>SUBCELLULAR LOCATION</scope>
</reference>
<reference key="7">
    <citation type="journal article" date="1993" name="Exp. Hematol.">
        <title>Erythroid potentiating activity of tissue inhibitor of metalloproteinases on the differentiation of erythropoietin-responsive mouse erythroleukemia cell line, ELM-I-1-3, is closely related to its cell growth potentiating activity.</title>
        <authorList>
            <person name="Murate T."/>
            <person name="Yamashita K."/>
            <person name="Ohashi H."/>
            <person name="Kagami Y."/>
            <person name="Tsushita K."/>
            <person name="Kinoshita T."/>
            <person name="Hotta T."/>
            <person name="Saito H."/>
            <person name="Yoshida S."/>
            <person name="Mori K.J."/>
        </authorList>
    </citation>
    <scope>FUNCTION</scope>
    <scope>SUBCELLULAR LOCATION</scope>
</reference>
<proteinExistence type="evidence at protein level"/>
<accession>P20414</accession>
<accession>Q3T098</accession>
<accession>Q53ZP2</accession>
<accession>Q9TVB0</accession>
<protein>
    <recommendedName>
        <fullName>Metalloproteinase inhibitor 1</fullName>
    </recommendedName>
    <alternativeName>
        <fullName>Embryogenin-1</fullName>
        <shortName>EG-1</shortName>
    </alternativeName>
    <alternativeName>
        <fullName>Tissue inhibitor of metalloproteinases 1</fullName>
        <shortName>TIMP-1</shortName>
    </alternativeName>
</protein>
<name>TIMP1_BOVIN</name>
<organism>
    <name type="scientific">Bos taurus</name>
    <name type="common">Bovine</name>
    <dbReference type="NCBI Taxonomy" id="9913"/>
    <lineage>
        <taxon>Eukaryota</taxon>
        <taxon>Metazoa</taxon>
        <taxon>Chordata</taxon>
        <taxon>Craniata</taxon>
        <taxon>Vertebrata</taxon>
        <taxon>Euteleostomi</taxon>
        <taxon>Mammalia</taxon>
        <taxon>Eutheria</taxon>
        <taxon>Laurasiatheria</taxon>
        <taxon>Artiodactyla</taxon>
        <taxon>Ruminantia</taxon>
        <taxon>Pecora</taxon>
        <taxon>Bovidae</taxon>
        <taxon>Bovinae</taxon>
        <taxon>Bos</taxon>
    </lineage>
</organism>
<keyword id="KW-0903">Direct protein sequencing</keyword>
<keyword id="KW-1015">Disulfide bond</keyword>
<keyword id="KW-0325">Glycoprotein</keyword>
<keyword id="KW-0339">Growth factor</keyword>
<keyword id="KW-0479">Metal-binding</keyword>
<keyword id="KW-0481">Metalloenzyme inhibitor</keyword>
<keyword id="KW-0483">Metalloprotease inhibitor</keyword>
<keyword id="KW-0597">Phosphoprotein</keyword>
<keyword id="KW-0646">Protease inhibitor</keyword>
<keyword id="KW-1185">Reference proteome</keyword>
<keyword id="KW-0964">Secreted</keyword>
<keyword id="KW-0732">Signal</keyword>
<keyword id="KW-0862">Zinc</keyword>
<feature type="signal peptide">
    <location>
        <begin position="1"/>
        <end position="23"/>
    </location>
</feature>
<feature type="chain" id="PRO_0000034320" description="Metalloproteinase inhibitor 1">
    <location>
        <begin position="24"/>
        <end position="207"/>
    </location>
</feature>
<feature type="domain" description="NTR" evidence="5">
    <location>
        <begin position="24"/>
        <end position="147"/>
    </location>
</feature>
<feature type="region of interest" description="Involved in metalloproteinase-binding" evidence="3">
    <location>
        <begin position="24"/>
        <end position="27"/>
    </location>
</feature>
<feature type="region of interest" description="Involved in metalloproteinase-binding" evidence="3">
    <location>
        <begin position="90"/>
        <end position="91"/>
    </location>
</feature>
<feature type="binding site" evidence="3">
    <location>
        <position position="24"/>
    </location>
    <ligand>
        <name>Zn(2+)</name>
        <dbReference type="ChEBI" id="CHEBI:29105"/>
        <note>ligand shared with metalloproteinase partner</note>
    </ligand>
</feature>
<feature type="site" description="Involved in metalloproteinase-binding" evidence="3">
    <location>
        <position position="37"/>
    </location>
</feature>
<feature type="modified residue" description="Phosphoserine" evidence="2">
    <location>
        <position position="178"/>
    </location>
</feature>
<feature type="glycosylation site" description="N-linked (GlcNAc...) asparagine" evidence="4">
    <location>
        <position position="53"/>
    </location>
</feature>
<feature type="glycosylation site" description="N-linked (GlcNAc...) asparagine" evidence="4">
    <location>
        <position position="101"/>
    </location>
</feature>
<feature type="disulfide bond" evidence="5">
    <location>
        <begin position="24"/>
        <end position="93"/>
    </location>
</feature>
<feature type="disulfide bond" evidence="5">
    <location>
        <begin position="26"/>
        <end position="122"/>
    </location>
</feature>
<feature type="disulfide bond" evidence="5">
    <location>
        <begin position="36"/>
        <end position="147"/>
    </location>
</feature>
<feature type="disulfide bond" evidence="5">
    <location>
        <begin position="150"/>
        <end position="197"/>
    </location>
</feature>
<feature type="disulfide bond" evidence="5">
    <location>
        <begin position="155"/>
        <end position="160"/>
    </location>
</feature>
<feature type="disulfide bond" evidence="5">
    <location>
        <begin position="168"/>
        <end position="189"/>
    </location>
</feature>
<sequence>MAPFAPMASGILLLLWLTAPSRACTCVPPHPQTAFCNSDVVIRAKFVGTAEVNETALYQRYEIKMTKMFKGFSALRDAPDIRFIYTPAMESVCGYFHRSQNRSEEFLIAGQLSNGHLHITTCSFVAPWNSMSSAQRRGFTKTYAAGCEECTVFPCSSIPCKLQSDTHCLWTDQLLTGSDKGFQSRHLACLPREPGLCTWQSLRAQMA</sequence>
<dbReference type="EMBL" id="M60073">
    <property type="protein sequence ID" value="AAA30784.1"/>
    <property type="molecule type" value="mRNA"/>
</dbReference>
<dbReference type="EMBL" id="S70841">
    <property type="protein sequence ID" value="AAB30892.1"/>
    <property type="molecule type" value="mRNA"/>
</dbReference>
<dbReference type="EMBL" id="AY295346">
    <property type="protein sequence ID" value="AAP44413.1"/>
    <property type="molecule type" value="mRNA"/>
</dbReference>
<dbReference type="EMBL" id="BC102489">
    <property type="protein sequence ID" value="AAI02490.1"/>
    <property type="molecule type" value="mRNA"/>
</dbReference>
<dbReference type="EMBL" id="AF144763">
    <property type="protein sequence ID" value="AAD30303.1"/>
    <property type="molecule type" value="mRNA"/>
</dbReference>
<dbReference type="PIR" id="A35685">
    <property type="entry name" value="A35685"/>
</dbReference>
<dbReference type="RefSeq" id="NP_776896.1">
    <property type="nucleotide sequence ID" value="NM_174471.4"/>
</dbReference>
<dbReference type="SMR" id="P20414"/>
<dbReference type="FunCoup" id="P20414">
    <property type="interactions" value="87"/>
</dbReference>
<dbReference type="STRING" id="9913.ENSBTAP00000006653"/>
<dbReference type="GlyCosmos" id="P20414">
    <property type="glycosylation" value="2 sites, No reported glycans"/>
</dbReference>
<dbReference type="GlyGen" id="P20414">
    <property type="glycosylation" value="2 sites"/>
</dbReference>
<dbReference type="PaxDb" id="9913-ENSBTAP00000006653"/>
<dbReference type="GeneID" id="282092"/>
<dbReference type="KEGG" id="bta:282092"/>
<dbReference type="CTD" id="7076"/>
<dbReference type="eggNOG" id="KOG4745">
    <property type="taxonomic scope" value="Eukaryota"/>
</dbReference>
<dbReference type="HOGENOM" id="CLU_084029_0_0_1"/>
<dbReference type="InParanoid" id="P20414"/>
<dbReference type="OrthoDB" id="6041373at2759"/>
<dbReference type="TreeFam" id="TF317409"/>
<dbReference type="Proteomes" id="UP000009136">
    <property type="component" value="Unplaced"/>
</dbReference>
<dbReference type="GO" id="GO:0031012">
    <property type="term" value="C:extracellular matrix"/>
    <property type="evidence" value="ECO:0000318"/>
    <property type="project" value="GO_Central"/>
</dbReference>
<dbReference type="GO" id="GO:0005615">
    <property type="term" value="C:extracellular space"/>
    <property type="evidence" value="ECO:0000250"/>
    <property type="project" value="UniProtKB"/>
</dbReference>
<dbReference type="GO" id="GO:0005125">
    <property type="term" value="F:cytokine activity"/>
    <property type="evidence" value="ECO:0000250"/>
    <property type="project" value="UniProtKB"/>
</dbReference>
<dbReference type="GO" id="GO:0008083">
    <property type="term" value="F:growth factor activity"/>
    <property type="evidence" value="ECO:0007669"/>
    <property type="project" value="UniProtKB-KW"/>
</dbReference>
<dbReference type="GO" id="GO:0008191">
    <property type="term" value="F:metalloendopeptidase inhibitor activity"/>
    <property type="evidence" value="ECO:0000250"/>
    <property type="project" value="UniProtKB"/>
</dbReference>
<dbReference type="GO" id="GO:0008270">
    <property type="term" value="F:zinc ion binding"/>
    <property type="evidence" value="ECO:0000250"/>
    <property type="project" value="UniProtKB"/>
</dbReference>
<dbReference type="GO" id="GO:0071492">
    <property type="term" value="P:cellular response to UV-A"/>
    <property type="evidence" value="ECO:0000250"/>
    <property type="project" value="UniProtKB"/>
</dbReference>
<dbReference type="GO" id="GO:0043086">
    <property type="term" value="P:negative regulation of catalytic activity"/>
    <property type="evidence" value="ECO:0000250"/>
    <property type="project" value="UniProtKB"/>
</dbReference>
<dbReference type="GO" id="GO:0010951">
    <property type="term" value="P:negative regulation of endopeptidase activity"/>
    <property type="evidence" value="ECO:0000250"/>
    <property type="project" value="UniProtKB"/>
</dbReference>
<dbReference type="GO" id="GO:0051045">
    <property type="term" value="P:negative regulation of membrane protein ectodomain proteolysis"/>
    <property type="evidence" value="ECO:0000318"/>
    <property type="project" value="GO_Central"/>
</dbReference>
<dbReference type="GO" id="GO:0008284">
    <property type="term" value="P:positive regulation of cell population proliferation"/>
    <property type="evidence" value="ECO:0000250"/>
    <property type="project" value="UniProtKB"/>
</dbReference>
<dbReference type="GO" id="GO:2001044">
    <property type="term" value="P:regulation of integrin-mediated signaling pathway"/>
    <property type="evidence" value="ECO:0000250"/>
    <property type="project" value="UniProtKB"/>
</dbReference>
<dbReference type="GO" id="GO:0034097">
    <property type="term" value="P:response to cytokine"/>
    <property type="evidence" value="ECO:0000318"/>
    <property type="project" value="GO_Central"/>
</dbReference>
<dbReference type="GO" id="GO:0009725">
    <property type="term" value="P:response to hormone"/>
    <property type="evidence" value="ECO:0000318"/>
    <property type="project" value="GO_Central"/>
</dbReference>
<dbReference type="FunFam" id="2.40.50.120:FF:000016">
    <property type="entry name" value="Metalloproteinase inhibitor 1"/>
    <property type="match status" value="1"/>
</dbReference>
<dbReference type="FunFam" id="3.90.370.10:FF:000001">
    <property type="entry name" value="Metalloproteinase inhibitor 3"/>
    <property type="match status" value="1"/>
</dbReference>
<dbReference type="Gene3D" id="2.40.50.120">
    <property type="match status" value="1"/>
</dbReference>
<dbReference type="Gene3D" id="3.90.370.10">
    <property type="entry name" value="Tissue inhibitor of metalloproteinase-1. Chain B, domain 1"/>
    <property type="match status" value="1"/>
</dbReference>
<dbReference type="InterPro" id="IPR001134">
    <property type="entry name" value="Netrin_domain"/>
</dbReference>
<dbReference type="InterPro" id="IPR001820">
    <property type="entry name" value="TIMP"/>
</dbReference>
<dbReference type="InterPro" id="IPR008993">
    <property type="entry name" value="TIMP-like_OB-fold"/>
</dbReference>
<dbReference type="InterPro" id="IPR027465">
    <property type="entry name" value="TIMP_C"/>
</dbReference>
<dbReference type="InterPro" id="IPR030490">
    <property type="entry name" value="TIMP_CS"/>
</dbReference>
<dbReference type="PANTHER" id="PTHR11844">
    <property type="entry name" value="METALLOPROTEASE INHIBITOR"/>
    <property type="match status" value="1"/>
</dbReference>
<dbReference type="PANTHER" id="PTHR11844:SF20">
    <property type="entry name" value="METALLOPROTEINASE INHIBITOR 1"/>
    <property type="match status" value="1"/>
</dbReference>
<dbReference type="Pfam" id="PF00965">
    <property type="entry name" value="TIMP"/>
    <property type="match status" value="1"/>
</dbReference>
<dbReference type="SMART" id="SM00206">
    <property type="entry name" value="NTR"/>
    <property type="match status" value="1"/>
</dbReference>
<dbReference type="SUPFAM" id="SSF50242">
    <property type="entry name" value="TIMP-like"/>
    <property type="match status" value="1"/>
</dbReference>
<dbReference type="PROSITE" id="PS50189">
    <property type="entry name" value="NTR"/>
    <property type="match status" value="1"/>
</dbReference>
<dbReference type="PROSITE" id="PS00288">
    <property type="entry name" value="TIMP"/>
    <property type="match status" value="1"/>
</dbReference>
<comment type="function">
    <text evidence="7 8">Metalloproteinase inhibitor that functions by forming one to one complexes with target metalloproteinases, such as collagenases, and irreversibly inactivates them by binding to their catalytic zinc cofactor. Acts on MMP1, MMP2, MMP3, MMP7, MMP8, MMP9, MMP10, MMP11, MMP12, MMP13 and MMP16. Does not act on MMP14. Also functions as a growth factor that regulates cell differentiation, migration and cell death and activates cellular signaling cascades via CD63 and ITGB1. Plays a role in integrin signaling.</text>
</comment>
<comment type="subunit">
    <text evidence="1">Interacts with MMP1, MMP3, MMP10 and MMP13, but has only very low affinity for MMP14. Interacts with CD63; identified in a complex with CD63 and ITGB1 (By similarity).</text>
</comment>
<comment type="subcellular location">
    <subcellularLocation>
        <location evidence="6 7 8">Secreted</location>
    </subcellularLocation>
</comment>
<comment type="PTM">
    <text>The activity of TIMP1 is dependent on the presence of disulfide bonds.</text>
</comment>
<comment type="PTM">
    <text evidence="1">N-glycosylated.</text>
</comment>
<comment type="similarity">
    <text evidence="9">Belongs to the protease inhibitor I35 (TIMP) family.</text>
</comment>
<evidence type="ECO:0000250" key="1"/>
<evidence type="ECO:0000250" key="2">
    <source>
        <dbReference type="UniProtKB" id="P01033"/>
    </source>
</evidence>
<evidence type="ECO:0000250" key="3">
    <source>
        <dbReference type="UniProtKB" id="P16035"/>
    </source>
</evidence>
<evidence type="ECO:0000255" key="4"/>
<evidence type="ECO:0000255" key="5">
    <source>
        <dbReference type="PROSITE-ProRule" id="PRU00295"/>
    </source>
</evidence>
<evidence type="ECO:0000269" key="6">
    <source>
    </source>
</evidence>
<evidence type="ECO:0000269" key="7">
    <source>
    </source>
</evidence>
<evidence type="ECO:0000269" key="8">
    <source>
    </source>
</evidence>
<evidence type="ECO:0000305" key="9"/>